<organism>
    <name type="scientific">Pelagibacter ubique (strain HTCC1062)</name>
    <dbReference type="NCBI Taxonomy" id="335992"/>
    <lineage>
        <taxon>Bacteria</taxon>
        <taxon>Pseudomonadati</taxon>
        <taxon>Pseudomonadota</taxon>
        <taxon>Alphaproteobacteria</taxon>
        <taxon>Candidatus Pelagibacterales</taxon>
        <taxon>Candidatus Pelagibacteraceae</taxon>
        <taxon>Candidatus Pelagibacter</taxon>
    </lineage>
</organism>
<accession>Q4FLP0</accession>
<protein>
    <recommendedName>
        <fullName evidence="1">Small ribosomal subunit protein uS11</fullName>
    </recommendedName>
    <alternativeName>
        <fullName evidence="2">30S ribosomal protein S11</fullName>
    </alternativeName>
</protein>
<gene>
    <name evidence="1" type="primary">rpsK</name>
    <name type="ordered locus">SAR11_1094</name>
</gene>
<feature type="chain" id="PRO_0000230413" description="Small ribosomal subunit protein uS11">
    <location>
        <begin position="1"/>
        <end position="150"/>
    </location>
</feature>
<name>RS11_PELUB</name>
<reference key="1">
    <citation type="journal article" date="2005" name="Science">
        <title>Genome streamlining in a cosmopolitan oceanic bacterium.</title>
        <authorList>
            <person name="Giovannoni S.J."/>
            <person name="Tripp H.J."/>
            <person name="Givan S."/>
            <person name="Podar M."/>
            <person name="Vergin K.L."/>
            <person name="Baptista D."/>
            <person name="Bibbs L."/>
            <person name="Eads J."/>
            <person name="Richardson T.H."/>
            <person name="Noordewier M."/>
            <person name="Rappe M.S."/>
            <person name="Short J.M."/>
            <person name="Carrington J.C."/>
            <person name="Mathur E.J."/>
        </authorList>
    </citation>
    <scope>NUCLEOTIDE SEQUENCE [LARGE SCALE GENOMIC DNA]</scope>
    <source>
        <strain>HTCC1062</strain>
    </source>
</reference>
<evidence type="ECO:0000255" key="1">
    <source>
        <dbReference type="HAMAP-Rule" id="MF_01310"/>
    </source>
</evidence>
<evidence type="ECO:0000305" key="2"/>
<proteinExistence type="inferred from homology"/>
<sequence>MAKVDKVENKDAVVEKKVDKKSKKSSYSKKKKIKKNILNGIAYVQSTFNNTIISIADTNGNVISWASAGQKGFKGSRKSTPYAAQIAADSAASKALEYGMKTLSVEVKGPGSGRETALRALQARGFKILSIKDTTPMPHNGVRPPKKRRV</sequence>
<dbReference type="EMBL" id="CP000084">
    <property type="protein sequence ID" value="AAZ21898.1"/>
    <property type="molecule type" value="Genomic_DNA"/>
</dbReference>
<dbReference type="RefSeq" id="WP_006996833.1">
    <property type="nucleotide sequence ID" value="NC_007205.1"/>
</dbReference>
<dbReference type="SMR" id="Q4FLP0"/>
<dbReference type="STRING" id="335992.SAR11_1094"/>
<dbReference type="GeneID" id="66295584"/>
<dbReference type="KEGG" id="pub:SAR11_1094"/>
<dbReference type="eggNOG" id="COG0100">
    <property type="taxonomic scope" value="Bacteria"/>
</dbReference>
<dbReference type="HOGENOM" id="CLU_072439_5_0_5"/>
<dbReference type="OrthoDB" id="9806415at2"/>
<dbReference type="Proteomes" id="UP000002528">
    <property type="component" value="Chromosome"/>
</dbReference>
<dbReference type="GO" id="GO:1990904">
    <property type="term" value="C:ribonucleoprotein complex"/>
    <property type="evidence" value="ECO:0007669"/>
    <property type="project" value="UniProtKB-KW"/>
</dbReference>
<dbReference type="GO" id="GO:0005840">
    <property type="term" value="C:ribosome"/>
    <property type="evidence" value="ECO:0007669"/>
    <property type="project" value="UniProtKB-KW"/>
</dbReference>
<dbReference type="GO" id="GO:0019843">
    <property type="term" value="F:rRNA binding"/>
    <property type="evidence" value="ECO:0007669"/>
    <property type="project" value="UniProtKB-UniRule"/>
</dbReference>
<dbReference type="GO" id="GO:0003735">
    <property type="term" value="F:structural constituent of ribosome"/>
    <property type="evidence" value="ECO:0007669"/>
    <property type="project" value="InterPro"/>
</dbReference>
<dbReference type="GO" id="GO:0006412">
    <property type="term" value="P:translation"/>
    <property type="evidence" value="ECO:0007669"/>
    <property type="project" value="UniProtKB-UniRule"/>
</dbReference>
<dbReference type="FunFam" id="3.30.420.80:FF:000001">
    <property type="entry name" value="30S ribosomal protein S11"/>
    <property type="match status" value="1"/>
</dbReference>
<dbReference type="Gene3D" id="3.30.420.80">
    <property type="entry name" value="Ribosomal protein S11"/>
    <property type="match status" value="1"/>
</dbReference>
<dbReference type="HAMAP" id="MF_01310">
    <property type="entry name" value="Ribosomal_uS11"/>
    <property type="match status" value="1"/>
</dbReference>
<dbReference type="InterPro" id="IPR001971">
    <property type="entry name" value="Ribosomal_uS11"/>
</dbReference>
<dbReference type="InterPro" id="IPR019981">
    <property type="entry name" value="Ribosomal_uS11_bac-type"/>
</dbReference>
<dbReference type="InterPro" id="IPR018102">
    <property type="entry name" value="Ribosomal_uS11_CS"/>
</dbReference>
<dbReference type="InterPro" id="IPR036967">
    <property type="entry name" value="Ribosomal_uS11_sf"/>
</dbReference>
<dbReference type="NCBIfam" id="NF003698">
    <property type="entry name" value="PRK05309.1"/>
    <property type="match status" value="1"/>
</dbReference>
<dbReference type="NCBIfam" id="TIGR03632">
    <property type="entry name" value="uS11_bact"/>
    <property type="match status" value="1"/>
</dbReference>
<dbReference type="PANTHER" id="PTHR11759">
    <property type="entry name" value="40S RIBOSOMAL PROTEIN S14/30S RIBOSOMAL PROTEIN S11"/>
    <property type="match status" value="1"/>
</dbReference>
<dbReference type="Pfam" id="PF00411">
    <property type="entry name" value="Ribosomal_S11"/>
    <property type="match status" value="1"/>
</dbReference>
<dbReference type="PIRSF" id="PIRSF002131">
    <property type="entry name" value="Ribosomal_S11"/>
    <property type="match status" value="1"/>
</dbReference>
<dbReference type="SUPFAM" id="SSF53137">
    <property type="entry name" value="Translational machinery components"/>
    <property type="match status" value="1"/>
</dbReference>
<dbReference type="PROSITE" id="PS00054">
    <property type="entry name" value="RIBOSOMAL_S11"/>
    <property type="match status" value="1"/>
</dbReference>
<comment type="function">
    <text evidence="1">Located on the platform of the 30S subunit, it bridges several disparate RNA helices of the 16S rRNA. Forms part of the Shine-Dalgarno cleft in the 70S ribosome.</text>
</comment>
<comment type="subunit">
    <text evidence="1">Part of the 30S ribosomal subunit. Interacts with proteins S7 and S18. Binds to IF-3.</text>
</comment>
<comment type="similarity">
    <text evidence="1">Belongs to the universal ribosomal protein uS11 family.</text>
</comment>
<keyword id="KW-1185">Reference proteome</keyword>
<keyword id="KW-0687">Ribonucleoprotein</keyword>
<keyword id="KW-0689">Ribosomal protein</keyword>
<keyword id="KW-0694">RNA-binding</keyword>
<keyword id="KW-0699">rRNA-binding</keyword>